<gene>
    <name evidence="1" type="primary">xerD</name>
    <name type="ordered locus">Cgl1419</name>
    <name type="ordered locus">cg1608</name>
</gene>
<comment type="function">
    <text evidence="1">Site-specific tyrosine recombinase, which acts by catalyzing the cutting and rejoining of the recombining DNA molecules. The XerC-XerD complex is essential to convert dimers of the bacterial chromosome into monomers to permit their segregation at cell division. It also contributes to the segregational stability of plasmids.</text>
</comment>
<comment type="subunit">
    <text evidence="1">Forms a cyclic heterotetrameric complex composed of two molecules of XerC and two molecules of XerD.</text>
</comment>
<comment type="subcellular location">
    <subcellularLocation>
        <location evidence="1">Cytoplasm</location>
    </subcellularLocation>
</comment>
<comment type="similarity">
    <text evidence="1">Belongs to the 'phage' integrase family. XerD subfamily.</text>
</comment>
<evidence type="ECO:0000255" key="1">
    <source>
        <dbReference type="HAMAP-Rule" id="MF_01807"/>
    </source>
</evidence>
<evidence type="ECO:0000255" key="2">
    <source>
        <dbReference type="PROSITE-ProRule" id="PRU01246"/>
    </source>
</evidence>
<evidence type="ECO:0000255" key="3">
    <source>
        <dbReference type="PROSITE-ProRule" id="PRU01248"/>
    </source>
</evidence>
<proteinExistence type="inferred from homology"/>
<protein>
    <recommendedName>
        <fullName evidence="1">Tyrosine recombinase XerD</fullName>
    </recommendedName>
</protein>
<keyword id="KW-0131">Cell cycle</keyword>
<keyword id="KW-0132">Cell division</keyword>
<keyword id="KW-0159">Chromosome partition</keyword>
<keyword id="KW-0963">Cytoplasm</keyword>
<keyword id="KW-0229">DNA integration</keyword>
<keyword id="KW-0233">DNA recombination</keyword>
<keyword id="KW-0238">DNA-binding</keyword>
<keyword id="KW-1185">Reference proteome</keyword>
<reference key="1">
    <citation type="journal article" date="2003" name="Appl. Microbiol. Biotechnol.">
        <title>The Corynebacterium glutamicum genome: features and impacts on biotechnological processes.</title>
        <authorList>
            <person name="Ikeda M."/>
            <person name="Nakagawa S."/>
        </authorList>
    </citation>
    <scope>NUCLEOTIDE SEQUENCE [LARGE SCALE GENOMIC DNA]</scope>
    <source>
        <strain>ATCC 13032 / DSM 20300 / JCM 1318 / BCRC 11384 / CCUG 27702 / LMG 3730 / NBRC 12168 / NCIMB 10025 / NRRL B-2784 / 534</strain>
    </source>
</reference>
<reference key="2">
    <citation type="journal article" date="2003" name="J. Biotechnol.">
        <title>The complete Corynebacterium glutamicum ATCC 13032 genome sequence and its impact on the production of L-aspartate-derived amino acids and vitamins.</title>
        <authorList>
            <person name="Kalinowski J."/>
            <person name="Bathe B."/>
            <person name="Bartels D."/>
            <person name="Bischoff N."/>
            <person name="Bott M."/>
            <person name="Burkovski A."/>
            <person name="Dusch N."/>
            <person name="Eggeling L."/>
            <person name="Eikmanns B.J."/>
            <person name="Gaigalat L."/>
            <person name="Goesmann A."/>
            <person name="Hartmann M."/>
            <person name="Huthmacher K."/>
            <person name="Kraemer R."/>
            <person name="Linke B."/>
            <person name="McHardy A.C."/>
            <person name="Meyer F."/>
            <person name="Moeckel B."/>
            <person name="Pfefferle W."/>
            <person name="Puehler A."/>
            <person name="Rey D.A."/>
            <person name="Rueckert C."/>
            <person name="Rupp O."/>
            <person name="Sahm H."/>
            <person name="Wendisch V.F."/>
            <person name="Wiegraebe I."/>
            <person name="Tauch A."/>
        </authorList>
    </citation>
    <scope>NUCLEOTIDE SEQUENCE [LARGE SCALE GENOMIC DNA]</scope>
    <source>
        <strain>ATCC 13032 / DSM 20300 / JCM 1318 / BCRC 11384 / CCUG 27702 / LMG 3730 / NBRC 12168 / NCIMB 10025 / NRRL B-2784 / 534</strain>
    </source>
</reference>
<feature type="chain" id="PRO_0000095385" description="Tyrosine recombinase XerD">
    <location>
        <begin position="1"/>
        <end position="304"/>
    </location>
</feature>
<feature type="domain" description="Core-binding (CB)" evidence="3">
    <location>
        <begin position="1"/>
        <end position="92"/>
    </location>
</feature>
<feature type="domain" description="Tyr recombinase" evidence="2">
    <location>
        <begin position="113"/>
        <end position="298"/>
    </location>
</feature>
<feature type="active site" evidence="1">
    <location>
        <position position="156"/>
    </location>
</feature>
<feature type="active site" evidence="1">
    <location>
        <position position="180"/>
    </location>
</feature>
<feature type="active site" evidence="1">
    <location>
        <position position="250"/>
    </location>
</feature>
<feature type="active site" evidence="1">
    <location>
        <position position="253"/>
    </location>
</feature>
<feature type="active site" evidence="1">
    <location>
        <position position="276"/>
    </location>
</feature>
<feature type="active site" description="O-(3'-phospho-DNA)-tyrosine intermediate" evidence="1">
    <location>
        <position position="285"/>
    </location>
</feature>
<dbReference type="EMBL" id="BA000036">
    <property type="protein sequence ID" value="BAB98812.1"/>
    <property type="molecule type" value="Genomic_DNA"/>
</dbReference>
<dbReference type="EMBL" id="BX927152">
    <property type="protein sequence ID" value="CAF21429.1"/>
    <property type="molecule type" value="Genomic_DNA"/>
</dbReference>
<dbReference type="RefSeq" id="NP_600637.1">
    <property type="nucleotide sequence ID" value="NC_003450.3"/>
</dbReference>
<dbReference type="RefSeq" id="WP_011014350.1">
    <property type="nucleotide sequence ID" value="NC_006958.1"/>
</dbReference>
<dbReference type="SMR" id="Q8NQL5"/>
<dbReference type="STRING" id="196627.cg1608"/>
<dbReference type="GeneID" id="1019394"/>
<dbReference type="KEGG" id="cgb:cg1608"/>
<dbReference type="KEGG" id="cgl:Cgl1419"/>
<dbReference type="PATRIC" id="fig|196627.13.peg.1387"/>
<dbReference type="eggNOG" id="COG4974">
    <property type="taxonomic scope" value="Bacteria"/>
</dbReference>
<dbReference type="HOGENOM" id="CLU_027562_9_0_11"/>
<dbReference type="OrthoDB" id="9801717at2"/>
<dbReference type="BioCyc" id="CORYNE:G18NG-11001-MONOMER"/>
<dbReference type="Proteomes" id="UP000000582">
    <property type="component" value="Chromosome"/>
</dbReference>
<dbReference type="Proteomes" id="UP000001009">
    <property type="component" value="Chromosome"/>
</dbReference>
<dbReference type="GO" id="GO:0005737">
    <property type="term" value="C:cytoplasm"/>
    <property type="evidence" value="ECO:0007669"/>
    <property type="project" value="UniProtKB-SubCell"/>
</dbReference>
<dbReference type="GO" id="GO:0003677">
    <property type="term" value="F:DNA binding"/>
    <property type="evidence" value="ECO:0007669"/>
    <property type="project" value="UniProtKB-KW"/>
</dbReference>
<dbReference type="GO" id="GO:0009037">
    <property type="term" value="F:tyrosine-based site-specific recombinase activity"/>
    <property type="evidence" value="ECO:0007669"/>
    <property type="project" value="UniProtKB-UniRule"/>
</dbReference>
<dbReference type="GO" id="GO:0051301">
    <property type="term" value="P:cell division"/>
    <property type="evidence" value="ECO:0007669"/>
    <property type="project" value="UniProtKB-KW"/>
</dbReference>
<dbReference type="GO" id="GO:0007059">
    <property type="term" value="P:chromosome segregation"/>
    <property type="evidence" value="ECO:0007669"/>
    <property type="project" value="UniProtKB-UniRule"/>
</dbReference>
<dbReference type="GO" id="GO:0006313">
    <property type="term" value="P:DNA transposition"/>
    <property type="evidence" value="ECO:0007669"/>
    <property type="project" value="UniProtKB-UniRule"/>
</dbReference>
<dbReference type="CDD" id="cd00798">
    <property type="entry name" value="INT_XerDC_C"/>
    <property type="match status" value="1"/>
</dbReference>
<dbReference type="Gene3D" id="1.10.150.130">
    <property type="match status" value="1"/>
</dbReference>
<dbReference type="Gene3D" id="1.10.443.10">
    <property type="entry name" value="Intergrase catalytic core"/>
    <property type="match status" value="1"/>
</dbReference>
<dbReference type="HAMAP" id="MF_01808">
    <property type="entry name" value="Recomb_XerC_XerD"/>
    <property type="match status" value="1"/>
</dbReference>
<dbReference type="HAMAP" id="MF_01807">
    <property type="entry name" value="Recomb_XerD"/>
    <property type="match status" value="1"/>
</dbReference>
<dbReference type="InterPro" id="IPR044068">
    <property type="entry name" value="CB"/>
</dbReference>
<dbReference type="InterPro" id="IPR011010">
    <property type="entry name" value="DNA_brk_join_enz"/>
</dbReference>
<dbReference type="InterPro" id="IPR013762">
    <property type="entry name" value="Integrase-like_cat_sf"/>
</dbReference>
<dbReference type="InterPro" id="IPR002104">
    <property type="entry name" value="Integrase_catalytic"/>
</dbReference>
<dbReference type="InterPro" id="IPR010998">
    <property type="entry name" value="Integrase_recombinase_N"/>
</dbReference>
<dbReference type="InterPro" id="IPR004107">
    <property type="entry name" value="Integrase_SAM-like_N"/>
</dbReference>
<dbReference type="InterPro" id="IPR011932">
    <property type="entry name" value="Recomb_XerD"/>
</dbReference>
<dbReference type="InterPro" id="IPR023009">
    <property type="entry name" value="Tyrosine_recombinase_XerC/XerD"/>
</dbReference>
<dbReference type="InterPro" id="IPR050090">
    <property type="entry name" value="Tyrosine_recombinase_XerCD"/>
</dbReference>
<dbReference type="NCBIfam" id="NF001399">
    <property type="entry name" value="PRK00283.1"/>
    <property type="match status" value="1"/>
</dbReference>
<dbReference type="NCBIfam" id="TIGR02225">
    <property type="entry name" value="recomb_XerD"/>
    <property type="match status" value="1"/>
</dbReference>
<dbReference type="PANTHER" id="PTHR30349">
    <property type="entry name" value="PHAGE INTEGRASE-RELATED"/>
    <property type="match status" value="1"/>
</dbReference>
<dbReference type="PANTHER" id="PTHR30349:SF81">
    <property type="entry name" value="TYROSINE RECOMBINASE XERC"/>
    <property type="match status" value="1"/>
</dbReference>
<dbReference type="Pfam" id="PF02899">
    <property type="entry name" value="Phage_int_SAM_1"/>
    <property type="match status" value="1"/>
</dbReference>
<dbReference type="Pfam" id="PF00589">
    <property type="entry name" value="Phage_integrase"/>
    <property type="match status" value="1"/>
</dbReference>
<dbReference type="SUPFAM" id="SSF56349">
    <property type="entry name" value="DNA breaking-rejoining enzymes"/>
    <property type="match status" value="1"/>
</dbReference>
<dbReference type="PROSITE" id="PS51900">
    <property type="entry name" value="CB"/>
    <property type="match status" value="1"/>
</dbReference>
<dbReference type="PROSITE" id="PS51898">
    <property type="entry name" value="TYR_RECOMBINASE"/>
    <property type="match status" value="1"/>
</dbReference>
<sequence length="304" mass="33135">MKARVLAKTWLTHLAVERGLSANTLSNYRRDVERYCDWLEAAGLDDIRDITTAHVESYVKDLRRGIDGQQALSASSAGRALIVARGLHKFALMEGEVAADVAADVSPPAMGRHLPDTLSINEVALLIDAIPHSDIATPVDLRDRALVELLYGTGARISEAIGLAVDDVSEMPEVLRITGKGSKQRIVPFGSMAQQAVREYLVRARPALSKGKSHALFLNQRGGPLSRQSAWAVLKKTVERAGLDKDISPHTLRHSFATHLLEGGADVRVVQELLGHSSVTTTQIYTHITADSLREVWRGAHPRA</sequence>
<accession>Q8NQL5</accession>
<name>XERD_CORGL</name>
<organism>
    <name type="scientific">Corynebacterium glutamicum (strain ATCC 13032 / DSM 20300 / JCM 1318 / BCRC 11384 / CCUG 27702 / LMG 3730 / NBRC 12168 / NCIMB 10025 / NRRL B-2784 / 534)</name>
    <dbReference type="NCBI Taxonomy" id="196627"/>
    <lineage>
        <taxon>Bacteria</taxon>
        <taxon>Bacillati</taxon>
        <taxon>Actinomycetota</taxon>
        <taxon>Actinomycetes</taxon>
        <taxon>Mycobacteriales</taxon>
        <taxon>Corynebacteriaceae</taxon>
        <taxon>Corynebacterium</taxon>
    </lineage>
</organism>